<comment type="function">
    <text evidence="1">Produces ATP from ADP in the presence of a proton gradient across the membrane.</text>
</comment>
<comment type="subunit">
    <text evidence="1">F-type ATPases have 2 components, CF(1) - the catalytic core - and CF(0) - the membrane proton channel. CF(1) has five subunits: alpha(3), beta(3), gamma(1), delta(1), epsilon(1). CF(0) has three main subunits: a, b and c.</text>
</comment>
<comment type="subcellular location">
    <subcellularLocation>
        <location evidence="1">Cell inner membrane</location>
        <topology evidence="1">Peripheral membrane protein</topology>
    </subcellularLocation>
</comment>
<comment type="similarity">
    <text evidence="1">Belongs to the ATPase epsilon chain family.</text>
</comment>
<sequence length="142" mass="15042">MAAMTVQLDIVSAESRIYSGLVAHLQVTGSEGDLGVMPGHAPLLTHIKPGMARIVKQDGSEEVFYLSGGILEVQPFSVSVLADVVLRADEIDEQAAVEAKRRAETALADAGADFNYAAAAIELAQAIAQLRVVETIKKNIAR</sequence>
<feature type="chain" id="PRO_1000081748" description="ATP synthase epsilon chain">
    <location>
        <begin position="1"/>
        <end position="142"/>
    </location>
</feature>
<protein>
    <recommendedName>
        <fullName evidence="1">ATP synthase epsilon chain</fullName>
    </recommendedName>
    <alternativeName>
        <fullName evidence="1">ATP synthase F1 sector epsilon subunit</fullName>
    </alternativeName>
    <alternativeName>
        <fullName evidence="1">F-ATPase epsilon subunit</fullName>
    </alternativeName>
</protein>
<gene>
    <name evidence="1" type="primary">atpC</name>
    <name type="ordered locus">Ssed_4485</name>
</gene>
<proteinExistence type="inferred from homology"/>
<dbReference type="EMBL" id="CP000821">
    <property type="protein sequence ID" value="ABV39087.1"/>
    <property type="molecule type" value="Genomic_DNA"/>
</dbReference>
<dbReference type="RefSeq" id="WP_012144814.1">
    <property type="nucleotide sequence ID" value="NC_009831.1"/>
</dbReference>
<dbReference type="SMR" id="A8G1W4"/>
<dbReference type="STRING" id="425104.Ssed_4485"/>
<dbReference type="KEGG" id="sse:Ssed_4485"/>
<dbReference type="eggNOG" id="COG0355">
    <property type="taxonomic scope" value="Bacteria"/>
</dbReference>
<dbReference type="HOGENOM" id="CLU_084338_2_0_6"/>
<dbReference type="OrthoDB" id="9791445at2"/>
<dbReference type="Proteomes" id="UP000002015">
    <property type="component" value="Chromosome"/>
</dbReference>
<dbReference type="GO" id="GO:0005886">
    <property type="term" value="C:plasma membrane"/>
    <property type="evidence" value="ECO:0007669"/>
    <property type="project" value="UniProtKB-SubCell"/>
</dbReference>
<dbReference type="GO" id="GO:0045259">
    <property type="term" value="C:proton-transporting ATP synthase complex"/>
    <property type="evidence" value="ECO:0007669"/>
    <property type="project" value="UniProtKB-KW"/>
</dbReference>
<dbReference type="GO" id="GO:0005524">
    <property type="term" value="F:ATP binding"/>
    <property type="evidence" value="ECO:0007669"/>
    <property type="project" value="UniProtKB-UniRule"/>
</dbReference>
<dbReference type="GO" id="GO:0046933">
    <property type="term" value="F:proton-transporting ATP synthase activity, rotational mechanism"/>
    <property type="evidence" value="ECO:0007669"/>
    <property type="project" value="UniProtKB-UniRule"/>
</dbReference>
<dbReference type="CDD" id="cd12152">
    <property type="entry name" value="F1-ATPase_delta"/>
    <property type="match status" value="1"/>
</dbReference>
<dbReference type="FunFam" id="1.20.5.440:FF:000001">
    <property type="entry name" value="ATP synthase epsilon chain"/>
    <property type="match status" value="1"/>
</dbReference>
<dbReference type="FunFam" id="2.60.15.10:FF:000001">
    <property type="entry name" value="ATP synthase epsilon chain"/>
    <property type="match status" value="1"/>
</dbReference>
<dbReference type="Gene3D" id="1.20.5.440">
    <property type="entry name" value="ATP synthase delta/epsilon subunit, C-terminal domain"/>
    <property type="match status" value="1"/>
</dbReference>
<dbReference type="Gene3D" id="2.60.15.10">
    <property type="entry name" value="F0F1 ATP synthase delta/epsilon subunit, N-terminal"/>
    <property type="match status" value="1"/>
</dbReference>
<dbReference type="HAMAP" id="MF_00530">
    <property type="entry name" value="ATP_synth_epsil_bac"/>
    <property type="match status" value="1"/>
</dbReference>
<dbReference type="InterPro" id="IPR036794">
    <property type="entry name" value="ATP_F1_dsu/esu_C_sf"/>
</dbReference>
<dbReference type="InterPro" id="IPR001469">
    <property type="entry name" value="ATP_synth_F1_dsu/esu"/>
</dbReference>
<dbReference type="InterPro" id="IPR020546">
    <property type="entry name" value="ATP_synth_F1_dsu/esu_N"/>
</dbReference>
<dbReference type="InterPro" id="IPR020547">
    <property type="entry name" value="ATP_synth_F1_esu_C"/>
</dbReference>
<dbReference type="InterPro" id="IPR036771">
    <property type="entry name" value="ATPsynth_dsu/esu_N"/>
</dbReference>
<dbReference type="NCBIfam" id="TIGR01216">
    <property type="entry name" value="ATP_synt_epsi"/>
    <property type="match status" value="1"/>
</dbReference>
<dbReference type="NCBIfam" id="NF001847">
    <property type="entry name" value="PRK00571.1-4"/>
    <property type="match status" value="1"/>
</dbReference>
<dbReference type="PANTHER" id="PTHR13822">
    <property type="entry name" value="ATP SYNTHASE DELTA/EPSILON CHAIN"/>
    <property type="match status" value="1"/>
</dbReference>
<dbReference type="PANTHER" id="PTHR13822:SF10">
    <property type="entry name" value="ATP SYNTHASE EPSILON CHAIN, CHLOROPLASTIC"/>
    <property type="match status" value="1"/>
</dbReference>
<dbReference type="Pfam" id="PF00401">
    <property type="entry name" value="ATP-synt_DE"/>
    <property type="match status" value="1"/>
</dbReference>
<dbReference type="Pfam" id="PF02823">
    <property type="entry name" value="ATP-synt_DE_N"/>
    <property type="match status" value="1"/>
</dbReference>
<dbReference type="SUPFAM" id="SSF46604">
    <property type="entry name" value="Epsilon subunit of F1F0-ATP synthase C-terminal domain"/>
    <property type="match status" value="1"/>
</dbReference>
<dbReference type="SUPFAM" id="SSF51344">
    <property type="entry name" value="Epsilon subunit of F1F0-ATP synthase N-terminal domain"/>
    <property type="match status" value="1"/>
</dbReference>
<accession>A8G1W4</accession>
<organism>
    <name type="scientific">Shewanella sediminis (strain HAW-EB3)</name>
    <dbReference type="NCBI Taxonomy" id="425104"/>
    <lineage>
        <taxon>Bacteria</taxon>
        <taxon>Pseudomonadati</taxon>
        <taxon>Pseudomonadota</taxon>
        <taxon>Gammaproteobacteria</taxon>
        <taxon>Alteromonadales</taxon>
        <taxon>Shewanellaceae</taxon>
        <taxon>Shewanella</taxon>
    </lineage>
</organism>
<reference key="1">
    <citation type="submission" date="2007-08" db="EMBL/GenBank/DDBJ databases">
        <title>Complete sequence of Shewanella sediminis HAW-EB3.</title>
        <authorList>
            <consortium name="US DOE Joint Genome Institute"/>
            <person name="Copeland A."/>
            <person name="Lucas S."/>
            <person name="Lapidus A."/>
            <person name="Barry K."/>
            <person name="Glavina del Rio T."/>
            <person name="Dalin E."/>
            <person name="Tice H."/>
            <person name="Pitluck S."/>
            <person name="Chertkov O."/>
            <person name="Brettin T."/>
            <person name="Bruce D."/>
            <person name="Detter J.C."/>
            <person name="Han C."/>
            <person name="Schmutz J."/>
            <person name="Larimer F."/>
            <person name="Land M."/>
            <person name="Hauser L."/>
            <person name="Kyrpides N."/>
            <person name="Kim E."/>
            <person name="Zhao J.-S."/>
            <person name="Richardson P."/>
        </authorList>
    </citation>
    <scope>NUCLEOTIDE SEQUENCE [LARGE SCALE GENOMIC DNA]</scope>
    <source>
        <strain>HAW-EB3</strain>
    </source>
</reference>
<evidence type="ECO:0000255" key="1">
    <source>
        <dbReference type="HAMAP-Rule" id="MF_00530"/>
    </source>
</evidence>
<name>ATPE_SHESH</name>
<keyword id="KW-0066">ATP synthesis</keyword>
<keyword id="KW-0997">Cell inner membrane</keyword>
<keyword id="KW-1003">Cell membrane</keyword>
<keyword id="KW-0139">CF(1)</keyword>
<keyword id="KW-0375">Hydrogen ion transport</keyword>
<keyword id="KW-0406">Ion transport</keyword>
<keyword id="KW-0472">Membrane</keyword>
<keyword id="KW-1185">Reference proteome</keyword>
<keyword id="KW-0813">Transport</keyword>